<evidence type="ECO:0000255" key="1">
    <source>
        <dbReference type="HAMAP-Rule" id="MF_00023"/>
    </source>
</evidence>
<feature type="chain" id="PRO_1000197634" description="SsrA-binding protein">
    <location>
        <begin position="1"/>
        <end position="161"/>
    </location>
</feature>
<keyword id="KW-0963">Cytoplasm</keyword>
<keyword id="KW-0694">RNA-binding</keyword>
<protein>
    <recommendedName>
        <fullName evidence="1">SsrA-binding protein</fullName>
    </recommendedName>
    <alternativeName>
        <fullName evidence="1">Small protein B</fullName>
    </alternativeName>
</protein>
<gene>
    <name evidence="1" type="primary">smpB</name>
    <name type="ordered locus">VCM66_0805</name>
</gene>
<sequence>MTKKKTNTKAGSNTIALNKKARHEYFIEDEFEAGMELQGWEVKSLRQGKANIAESYVYIKDGEAFISGMTIIPLQQASTHVVANPTRIRKLLLSRRELDNLFGRINREGMTLTALSLYWSRSWVKIKIGVAKGKKLHDKREDLKEKEWQRQKDRVMKSALR</sequence>
<reference key="1">
    <citation type="journal article" date="2008" name="PLoS ONE">
        <title>A recalibrated molecular clock and independent origins for the cholera pandemic clones.</title>
        <authorList>
            <person name="Feng L."/>
            <person name="Reeves P.R."/>
            <person name="Lan R."/>
            <person name="Ren Y."/>
            <person name="Gao C."/>
            <person name="Zhou Z."/>
            <person name="Ren Y."/>
            <person name="Cheng J."/>
            <person name="Wang W."/>
            <person name="Wang J."/>
            <person name="Qian W."/>
            <person name="Li D."/>
            <person name="Wang L."/>
        </authorList>
    </citation>
    <scope>NUCLEOTIDE SEQUENCE [LARGE SCALE GENOMIC DNA]</scope>
    <source>
        <strain>M66-2</strain>
    </source>
</reference>
<name>SSRP_VIBCM</name>
<accession>C3LT98</accession>
<organism>
    <name type="scientific">Vibrio cholerae serotype O1 (strain M66-2)</name>
    <dbReference type="NCBI Taxonomy" id="579112"/>
    <lineage>
        <taxon>Bacteria</taxon>
        <taxon>Pseudomonadati</taxon>
        <taxon>Pseudomonadota</taxon>
        <taxon>Gammaproteobacteria</taxon>
        <taxon>Vibrionales</taxon>
        <taxon>Vibrionaceae</taxon>
        <taxon>Vibrio</taxon>
    </lineage>
</organism>
<dbReference type="EMBL" id="CP001233">
    <property type="protein sequence ID" value="ACP05124.1"/>
    <property type="molecule type" value="Genomic_DNA"/>
</dbReference>
<dbReference type="RefSeq" id="WP_000162689.1">
    <property type="nucleotide sequence ID" value="NC_012578.1"/>
</dbReference>
<dbReference type="SMR" id="C3LT98"/>
<dbReference type="GeneID" id="89515035"/>
<dbReference type="KEGG" id="vcm:VCM66_0805"/>
<dbReference type="HOGENOM" id="CLU_108953_3_0_6"/>
<dbReference type="Proteomes" id="UP000001217">
    <property type="component" value="Chromosome I"/>
</dbReference>
<dbReference type="GO" id="GO:0005829">
    <property type="term" value="C:cytosol"/>
    <property type="evidence" value="ECO:0007669"/>
    <property type="project" value="TreeGrafter"/>
</dbReference>
<dbReference type="GO" id="GO:0003723">
    <property type="term" value="F:RNA binding"/>
    <property type="evidence" value="ECO:0007669"/>
    <property type="project" value="UniProtKB-UniRule"/>
</dbReference>
<dbReference type="GO" id="GO:0070929">
    <property type="term" value="P:trans-translation"/>
    <property type="evidence" value="ECO:0007669"/>
    <property type="project" value="UniProtKB-UniRule"/>
</dbReference>
<dbReference type="CDD" id="cd09294">
    <property type="entry name" value="SmpB"/>
    <property type="match status" value="1"/>
</dbReference>
<dbReference type="Gene3D" id="2.40.280.10">
    <property type="match status" value="1"/>
</dbReference>
<dbReference type="HAMAP" id="MF_00023">
    <property type="entry name" value="SmpB"/>
    <property type="match status" value="1"/>
</dbReference>
<dbReference type="InterPro" id="IPR023620">
    <property type="entry name" value="SmpB"/>
</dbReference>
<dbReference type="InterPro" id="IPR000037">
    <property type="entry name" value="SsrA-bd_prot"/>
</dbReference>
<dbReference type="InterPro" id="IPR020081">
    <property type="entry name" value="SsrA-bd_prot_CS"/>
</dbReference>
<dbReference type="NCBIfam" id="NF003843">
    <property type="entry name" value="PRK05422.1"/>
    <property type="match status" value="1"/>
</dbReference>
<dbReference type="NCBIfam" id="TIGR00086">
    <property type="entry name" value="smpB"/>
    <property type="match status" value="1"/>
</dbReference>
<dbReference type="PANTHER" id="PTHR30308:SF2">
    <property type="entry name" value="SSRA-BINDING PROTEIN"/>
    <property type="match status" value="1"/>
</dbReference>
<dbReference type="PANTHER" id="PTHR30308">
    <property type="entry name" value="TMRNA-BINDING COMPONENT OF TRANS-TRANSLATION TAGGING COMPLEX"/>
    <property type="match status" value="1"/>
</dbReference>
<dbReference type="Pfam" id="PF01668">
    <property type="entry name" value="SmpB"/>
    <property type="match status" value="1"/>
</dbReference>
<dbReference type="SUPFAM" id="SSF74982">
    <property type="entry name" value="Small protein B (SmpB)"/>
    <property type="match status" value="1"/>
</dbReference>
<dbReference type="PROSITE" id="PS01317">
    <property type="entry name" value="SSRP"/>
    <property type="match status" value="1"/>
</dbReference>
<proteinExistence type="inferred from homology"/>
<comment type="function">
    <text evidence="1">Required for rescue of stalled ribosomes mediated by trans-translation. Binds to transfer-messenger RNA (tmRNA), required for stable association of tmRNA with ribosomes. tmRNA and SmpB together mimic tRNA shape, replacing the anticodon stem-loop with SmpB. tmRNA is encoded by the ssrA gene; the 2 termini fold to resemble tRNA(Ala) and it encodes a 'tag peptide', a short internal open reading frame. During trans-translation Ala-aminoacylated tmRNA acts like a tRNA, entering the A-site of stalled ribosomes, displacing the stalled mRNA. The ribosome then switches to translate the ORF on the tmRNA; the nascent peptide is terminated with the 'tag peptide' encoded by the tmRNA and targeted for degradation. The ribosome is freed to recommence translation, which seems to be the essential function of trans-translation.</text>
</comment>
<comment type="subcellular location">
    <subcellularLocation>
        <location evidence="1">Cytoplasm</location>
    </subcellularLocation>
    <text evidence="1">The tmRNA-SmpB complex associates with stalled 70S ribosomes.</text>
</comment>
<comment type="similarity">
    <text evidence="1">Belongs to the SmpB family.</text>
</comment>